<organism>
    <name type="scientific">Xylella fastidiosa (strain M23)</name>
    <dbReference type="NCBI Taxonomy" id="405441"/>
    <lineage>
        <taxon>Bacteria</taxon>
        <taxon>Pseudomonadati</taxon>
        <taxon>Pseudomonadota</taxon>
        <taxon>Gammaproteobacteria</taxon>
        <taxon>Lysobacterales</taxon>
        <taxon>Lysobacteraceae</taxon>
        <taxon>Xylella</taxon>
    </lineage>
</organism>
<name>EFPL_XYLF2</name>
<dbReference type="EMBL" id="CP001011">
    <property type="protein sequence ID" value="ACB92756.1"/>
    <property type="molecule type" value="Genomic_DNA"/>
</dbReference>
<dbReference type="SMR" id="B2I5W7"/>
<dbReference type="KEGG" id="xfn:XfasM23_1338"/>
<dbReference type="HOGENOM" id="CLU_074944_2_0_6"/>
<dbReference type="Proteomes" id="UP000001698">
    <property type="component" value="Chromosome"/>
</dbReference>
<dbReference type="GO" id="GO:0005737">
    <property type="term" value="C:cytoplasm"/>
    <property type="evidence" value="ECO:0007669"/>
    <property type="project" value="InterPro"/>
</dbReference>
<dbReference type="GO" id="GO:0003746">
    <property type="term" value="F:translation elongation factor activity"/>
    <property type="evidence" value="ECO:0007669"/>
    <property type="project" value="UniProtKB-UniRule"/>
</dbReference>
<dbReference type="GO" id="GO:0043043">
    <property type="term" value="P:peptide biosynthetic process"/>
    <property type="evidence" value="ECO:0007669"/>
    <property type="project" value="InterPro"/>
</dbReference>
<dbReference type="CDD" id="cd05794">
    <property type="entry name" value="S1_EF-P_repeat_2"/>
    <property type="match status" value="1"/>
</dbReference>
<dbReference type="FunFam" id="2.40.50.140:FF:000004">
    <property type="entry name" value="Elongation factor P"/>
    <property type="match status" value="1"/>
</dbReference>
<dbReference type="Gene3D" id="2.30.30.30">
    <property type="match status" value="1"/>
</dbReference>
<dbReference type="Gene3D" id="2.40.50.140">
    <property type="entry name" value="Nucleic acid-binding proteins"/>
    <property type="match status" value="2"/>
</dbReference>
<dbReference type="HAMAP" id="MF_00646">
    <property type="entry name" value="EFP"/>
    <property type="match status" value="1"/>
</dbReference>
<dbReference type="InterPro" id="IPR015365">
    <property type="entry name" value="Elong-fact-P_C"/>
</dbReference>
<dbReference type="InterPro" id="IPR012340">
    <property type="entry name" value="NA-bd_OB-fold"/>
</dbReference>
<dbReference type="InterPro" id="IPR014722">
    <property type="entry name" value="Rib_uL2_dom2"/>
</dbReference>
<dbReference type="InterPro" id="IPR020599">
    <property type="entry name" value="Transl_elong_fac_P/YeiP"/>
</dbReference>
<dbReference type="InterPro" id="IPR013185">
    <property type="entry name" value="Transl_elong_KOW-like"/>
</dbReference>
<dbReference type="InterPro" id="IPR011897">
    <property type="entry name" value="Transl_elong_p-like_YeiP"/>
</dbReference>
<dbReference type="InterPro" id="IPR001059">
    <property type="entry name" value="Transl_elong_P/YeiP_cen"/>
</dbReference>
<dbReference type="InterPro" id="IPR013852">
    <property type="entry name" value="Transl_elong_P/YeiP_CS"/>
</dbReference>
<dbReference type="InterPro" id="IPR008991">
    <property type="entry name" value="Translation_prot_SH3-like_sf"/>
</dbReference>
<dbReference type="NCBIfam" id="NF003392">
    <property type="entry name" value="PRK04542.1"/>
    <property type="match status" value="1"/>
</dbReference>
<dbReference type="NCBIfam" id="TIGR02178">
    <property type="entry name" value="yeiP"/>
    <property type="match status" value="1"/>
</dbReference>
<dbReference type="PANTHER" id="PTHR30053">
    <property type="entry name" value="ELONGATION FACTOR P"/>
    <property type="match status" value="1"/>
</dbReference>
<dbReference type="PANTHER" id="PTHR30053:SF14">
    <property type="entry name" value="TRANSLATION ELONGATION FACTOR KOW-LIKE DOMAIN-CONTAINING PROTEIN"/>
    <property type="match status" value="1"/>
</dbReference>
<dbReference type="Pfam" id="PF01132">
    <property type="entry name" value="EFP"/>
    <property type="match status" value="1"/>
</dbReference>
<dbReference type="Pfam" id="PF08207">
    <property type="entry name" value="EFP_N"/>
    <property type="match status" value="1"/>
</dbReference>
<dbReference type="Pfam" id="PF09285">
    <property type="entry name" value="Elong-fact-P_C"/>
    <property type="match status" value="1"/>
</dbReference>
<dbReference type="PIRSF" id="PIRSF005901">
    <property type="entry name" value="EF-P"/>
    <property type="match status" value="1"/>
</dbReference>
<dbReference type="SMART" id="SM01185">
    <property type="entry name" value="EFP"/>
    <property type="match status" value="1"/>
</dbReference>
<dbReference type="SMART" id="SM00841">
    <property type="entry name" value="Elong-fact-P_C"/>
    <property type="match status" value="1"/>
</dbReference>
<dbReference type="SUPFAM" id="SSF50249">
    <property type="entry name" value="Nucleic acid-binding proteins"/>
    <property type="match status" value="2"/>
</dbReference>
<dbReference type="SUPFAM" id="SSF50104">
    <property type="entry name" value="Translation proteins SH3-like domain"/>
    <property type="match status" value="1"/>
</dbReference>
<dbReference type="PROSITE" id="PS01275">
    <property type="entry name" value="EFP"/>
    <property type="match status" value="1"/>
</dbReference>
<gene>
    <name type="ordered locus">XfasM23_1338</name>
</gene>
<evidence type="ECO:0000255" key="1">
    <source>
        <dbReference type="HAMAP-Rule" id="MF_00646"/>
    </source>
</evidence>
<comment type="similarity">
    <text evidence="1">Belongs to the elongation factor P family.</text>
</comment>
<feature type="chain" id="PRO_1000130931" description="Elongation factor P-like protein">
    <location>
        <begin position="1"/>
        <end position="188"/>
    </location>
</feature>
<protein>
    <recommendedName>
        <fullName evidence="1">Elongation factor P-like protein</fullName>
    </recommendedName>
</protein>
<proteinExistence type="inferred from homology"/>
<reference key="1">
    <citation type="journal article" date="2010" name="J. Bacteriol.">
        <title>Whole genome sequences of two Xylella fastidiosa strains (M12 and M23) causing almond leaf scorch disease in California.</title>
        <authorList>
            <person name="Chen J."/>
            <person name="Xie G."/>
            <person name="Han S."/>
            <person name="Chertkov O."/>
            <person name="Sims D."/>
            <person name="Civerolo E.L."/>
        </authorList>
    </citation>
    <scope>NUCLEOTIDE SEQUENCE [LARGE SCALE GENOMIC DNA]</scope>
    <source>
        <strain>M23</strain>
    </source>
</reference>
<sequence>MKASEMKKGSIVEYSNGTYQIRDIQRSSPQGRGGNVRFRFVMYSVPGGSKLEASFDADEMLTAVELLRREASFSYKDGEAFVFLDEEDYTLYTLDAEAIGDNAGYISEGLSGCYVQLIDASPVALQLPQHVVLEVVDTPPELKGGTATKRPKPAKLITGIEVMVPEYITTGERILVNTTTGAFGGRAS</sequence>
<accession>B2I5W7</accession>